<organism>
    <name type="scientific">Arabidopsis thaliana</name>
    <name type="common">Mouse-ear cress</name>
    <dbReference type="NCBI Taxonomy" id="3702"/>
    <lineage>
        <taxon>Eukaryota</taxon>
        <taxon>Viridiplantae</taxon>
        <taxon>Streptophyta</taxon>
        <taxon>Embryophyta</taxon>
        <taxon>Tracheophyta</taxon>
        <taxon>Spermatophyta</taxon>
        <taxon>Magnoliopsida</taxon>
        <taxon>eudicotyledons</taxon>
        <taxon>Gunneridae</taxon>
        <taxon>Pentapetalae</taxon>
        <taxon>rosids</taxon>
        <taxon>malvids</taxon>
        <taxon>Brassicales</taxon>
        <taxon>Brassicaceae</taxon>
        <taxon>Camelineae</taxon>
        <taxon>Arabidopsis</taxon>
    </lineage>
</organism>
<accession>Q0WQM8</accession>
<accession>Q9SSB3</accession>
<evidence type="ECO:0000255" key="1">
    <source>
        <dbReference type="PROSITE-ProRule" id="PRU00080"/>
    </source>
</evidence>
<evidence type="ECO:0000305" key="2"/>
<sequence>MVRDIVDDPLDEDDIALVKTYGLVPYSAPIKKVEKEIKELTEKINDLCGIKESDTGLAPLSKQMMQEGQPLQVGYVSCFRYIPIDLLMDIFSRVPAKSIARFRCVSKLWESILCRPDFKELFMTMSSIRPPLLLFTFQDDDGNLFFFSSPHPQIPCNENTSLVPTRYHVQHTTDSFSEIGSPLCGFICRRGKRNLDTMVICNPVTGESVSLPKVELKSINTETRPYLGYDPVRKQLKVLCIKSDDIPNTCDEHQVLTLENGNHLWRTIQCKPHYPKSDGICIDGILYYTAGFDMRARVSMVVCFDVRSEKFSFINIHVFMLMNDSCTLINYKGKLGALQFTCLSPKRLRFWVLVNAEKNIWTKCIYALPPLWNNLVQHTELAIVGMTDGGEVVLSQYCLIYAFYIYYFNLESKSLTRVQIQDVEMFKRTRVYTSLGYVENFKLM</sequence>
<reference key="1">
    <citation type="journal article" date="2000" name="Nature">
        <title>Sequence and analysis of chromosome 1 of the plant Arabidopsis thaliana.</title>
        <authorList>
            <person name="Theologis A."/>
            <person name="Ecker J.R."/>
            <person name="Palm C.J."/>
            <person name="Federspiel N.A."/>
            <person name="Kaul S."/>
            <person name="White O."/>
            <person name="Alonso J."/>
            <person name="Altafi H."/>
            <person name="Araujo R."/>
            <person name="Bowman C.L."/>
            <person name="Brooks S.Y."/>
            <person name="Buehler E."/>
            <person name="Chan A."/>
            <person name="Chao Q."/>
            <person name="Chen H."/>
            <person name="Cheuk R.F."/>
            <person name="Chin C.W."/>
            <person name="Chung M.K."/>
            <person name="Conn L."/>
            <person name="Conway A.B."/>
            <person name="Conway A.R."/>
            <person name="Creasy T.H."/>
            <person name="Dewar K."/>
            <person name="Dunn P."/>
            <person name="Etgu P."/>
            <person name="Feldblyum T.V."/>
            <person name="Feng J.-D."/>
            <person name="Fong B."/>
            <person name="Fujii C.Y."/>
            <person name="Gill J.E."/>
            <person name="Goldsmith A.D."/>
            <person name="Haas B."/>
            <person name="Hansen N.F."/>
            <person name="Hughes B."/>
            <person name="Huizar L."/>
            <person name="Hunter J.L."/>
            <person name="Jenkins J."/>
            <person name="Johnson-Hopson C."/>
            <person name="Khan S."/>
            <person name="Khaykin E."/>
            <person name="Kim C.J."/>
            <person name="Koo H.L."/>
            <person name="Kremenetskaia I."/>
            <person name="Kurtz D.B."/>
            <person name="Kwan A."/>
            <person name="Lam B."/>
            <person name="Langin-Hooper S."/>
            <person name="Lee A."/>
            <person name="Lee J.M."/>
            <person name="Lenz C.A."/>
            <person name="Li J.H."/>
            <person name="Li Y.-P."/>
            <person name="Lin X."/>
            <person name="Liu S.X."/>
            <person name="Liu Z.A."/>
            <person name="Luros J.S."/>
            <person name="Maiti R."/>
            <person name="Marziali A."/>
            <person name="Militscher J."/>
            <person name="Miranda M."/>
            <person name="Nguyen M."/>
            <person name="Nierman W.C."/>
            <person name="Osborne B.I."/>
            <person name="Pai G."/>
            <person name="Peterson J."/>
            <person name="Pham P.K."/>
            <person name="Rizzo M."/>
            <person name="Rooney T."/>
            <person name="Rowley D."/>
            <person name="Sakano H."/>
            <person name="Salzberg S.L."/>
            <person name="Schwartz J.R."/>
            <person name="Shinn P."/>
            <person name="Southwick A.M."/>
            <person name="Sun H."/>
            <person name="Tallon L.J."/>
            <person name="Tambunga G."/>
            <person name="Toriumi M.J."/>
            <person name="Town C.D."/>
            <person name="Utterback T."/>
            <person name="Van Aken S."/>
            <person name="Vaysberg M."/>
            <person name="Vysotskaia V.S."/>
            <person name="Walker M."/>
            <person name="Wu D."/>
            <person name="Yu G."/>
            <person name="Fraser C.M."/>
            <person name="Venter J.C."/>
            <person name="Davis R.W."/>
        </authorList>
    </citation>
    <scope>NUCLEOTIDE SEQUENCE [LARGE SCALE GENOMIC DNA]</scope>
    <source>
        <strain>cv. Columbia</strain>
    </source>
</reference>
<reference key="2">
    <citation type="journal article" date="2017" name="Plant J.">
        <title>Araport11: a complete reannotation of the Arabidopsis thaliana reference genome.</title>
        <authorList>
            <person name="Cheng C.Y."/>
            <person name="Krishnakumar V."/>
            <person name="Chan A.P."/>
            <person name="Thibaud-Nissen F."/>
            <person name="Schobel S."/>
            <person name="Town C.D."/>
        </authorList>
    </citation>
    <scope>GENOME REANNOTATION</scope>
    <source>
        <strain>cv. Columbia</strain>
    </source>
</reference>
<reference key="3">
    <citation type="submission" date="2006-07" db="EMBL/GenBank/DDBJ databases">
        <title>Large-scale analysis of RIKEN Arabidopsis full-length (RAFL) cDNAs.</title>
        <authorList>
            <person name="Totoki Y."/>
            <person name="Seki M."/>
            <person name="Ishida J."/>
            <person name="Nakajima M."/>
            <person name="Enju A."/>
            <person name="Kamiya A."/>
            <person name="Narusaka M."/>
            <person name="Shin-i T."/>
            <person name="Nakagawa M."/>
            <person name="Sakamoto N."/>
            <person name="Oishi K."/>
            <person name="Kohara Y."/>
            <person name="Kobayashi M."/>
            <person name="Toyoda A."/>
            <person name="Sakaki Y."/>
            <person name="Sakurai T."/>
            <person name="Iida K."/>
            <person name="Akiyama K."/>
            <person name="Satou M."/>
            <person name="Toyoda T."/>
            <person name="Konagaya A."/>
            <person name="Carninci P."/>
            <person name="Kawai J."/>
            <person name="Hayashizaki Y."/>
            <person name="Shinozaki K."/>
        </authorList>
    </citation>
    <scope>NUCLEOTIDE SEQUENCE [LARGE SCALE MRNA]</scope>
    <source>
        <strain>cv. Columbia</strain>
    </source>
</reference>
<feature type="chain" id="PRO_0000283332" description="F-box protein At1g53790">
    <location>
        <begin position="1"/>
        <end position="444"/>
    </location>
</feature>
<feature type="domain" description="F-box" evidence="1">
    <location>
        <begin position="76"/>
        <end position="125"/>
    </location>
</feature>
<protein>
    <recommendedName>
        <fullName>F-box protein At1g53790</fullName>
    </recommendedName>
</protein>
<comment type="alternative products">
    <event type="alternative splicing"/>
    <isoform>
        <id>Q0WQM8-1</id>
        <name>1</name>
        <sequence type="displayed"/>
    </isoform>
    <text>A number of isoforms are produced. According to EST sequences.</text>
</comment>
<comment type="sequence caution" evidence="2">
    <conflict type="erroneous gene model prediction">
        <sequence resource="EMBL-CDS" id="AAF02865"/>
    </conflict>
</comment>
<name>FB58_ARATH</name>
<gene>
    <name type="ordered locus">At1g53790</name>
    <name type="ORF">T18A20.3</name>
</gene>
<proteinExistence type="evidence at transcript level"/>
<dbReference type="EMBL" id="AC009324">
    <property type="protein sequence ID" value="AAF02865.1"/>
    <property type="status" value="ALT_SEQ"/>
    <property type="molecule type" value="Genomic_DNA"/>
</dbReference>
<dbReference type="EMBL" id="CP002684">
    <property type="protein sequence ID" value="AEE33001.1"/>
    <property type="molecule type" value="Genomic_DNA"/>
</dbReference>
<dbReference type="EMBL" id="AK228664">
    <property type="protein sequence ID" value="BAF00571.1"/>
    <property type="molecule type" value="mRNA"/>
</dbReference>
<dbReference type="PIR" id="A96578">
    <property type="entry name" value="A96578"/>
</dbReference>
<dbReference type="RefSeq" id="NP_175782.2">
    <molecule id="Q0WQM8-1"/>
    <property type="nucleotide sequence ID" value="NM_104256.4"/>
</dbReference>
<dbReference type="SMR" id="Q0WQM8"/>
<dbReference type="BioGRID" id="27041">
    <property type="interactions" value="12"/>
</dbReference>
<dbReference type="FunCoup" id="Q0WQM8">
    <property type="interactions" value="261"/>
</dbReference>
<dbReference type="IntAct" id="Q0WQM8">
    <property type="interactions" value="1"/>
</dbReference>
<dbReference type="STRING" id="3702.Q0WQM8"/>
<dbReference type="PaxDb" id="3702-AT1G53790.2"/>
<dbReference type="ProteomicsDB" id="230677">
    <molecule id="Q0WQM8-1"/>
</dbReference>
<dbReference type="EnsemblPlants" id="AT1G53790.1">
    <molecule id="Q0WQM8-1"/>
    <property type="protein sequence ID" value="AT1G53790.1"/>
    <property type="gene ID" value="AT1G53790"/>
</dbReference>
<dbReference type="GeneID" id="841816"/>
<dbReference type="Gramene" id="AT1G53790.1">
    <molecule id="Q0WQM8-1"/>
    <property type="protein sequence ID" value="AT1G53790.1"/>
    <property type="gene ID" value="AT1G53790"/>
</dbReference>
<dbReference type="KEGG" id="ath:AT1G53790"/>
<dbReference type="Araport" id="AT1G53790"/>
<dbReference type="TAIR" id="AT1G53790"/>
<dbReference type="eggNOG" id="KOG0729">
    <property type="taxonomic scope" value="Eukaryota"/>
</dbReference>
<dbReference type="HOGENOM" id="CLU_027176_8_1_1"/>
<dbReference type="InParanoid" id="Q0WQM8"/>
<dbReference type="OMA" id="IDECMLM"/>
<dbReference type="PhylomeDB" id="Q0WQM8"/>
<dbReference type="PRO" id="PR:Q0WQM8"/>
<dbReference type="Proteomes" id="UP000006548">
    <property type="component" value="Chromosome 1"/>
</dbReference>
<dbReference type="ExpressionAtlas" id="Q0WQM8">
    <property type="expression patterns" value="baseline and differential"/>
</dbReference>
<dbReference type="CDD" id="cd22157">
    <property type="entry name" value="F-box_AtFBW1-like"/>
    <property type="match status" value="1"/>
</dbReference>
<dbReference type="Gene3D" id="1.20.1280.50">
    <property type="match status" value="1"/>
</dbReference>
<dbReference type="InterPro" id="IPR013187">
    <property type="entry name" value="F-box-assoc_dom_typ3"/>
</dbReference>
<dbReference type="InterPro" id="IPR017451">
    <property type="entry name" value="F-box-assoc_interact_dom"/>
</dbReference>
<dbReference type="InterPro" id="IPR036047">
    <property type="entry name" value="F-box-like_dom_sf"/>
</dbReference>
<dbReference type="InterPro" id="IPR001810">
    <property type="entry name" value="F-box_dom"/>
</dbReference>
<dbReference type="NCBIfam" id="TIGR01640">
    <property type="entry name" value="F_box_assoc_1"/>
    <property type="match status" value="1"/>
</dbReference>
<dbReference type="PANTHER" id="PTHR31111:SF59">
    <property type="entry name" value="(RAPE) HYPOTHETICAL PROTEIN"/>
    <property type="match status" value="1"/>
</dbReference>
<dbReference type="PANTHER" id="PTHR31111">
    <property type="entry name" value="BNAA05G37150D PROTEIN-RELATED"/>
    <property type="match status" value="1"/>
</dbReference>
<dbReference type="Pfam" id="PF00646">
    <property type="entry name" value="F-box"/>
    <property type="match status" value="1"/>
</dbReference>
<dbReference type="Pfam" id="PF08268">
    <property type="entry name" value="FBA_3"/>
    <property type="match status" value="1"/>
</dbReference>
<dbReference type="SMART" id="SM00256">
    <property type="entry name" value="FBOX"/>
    <property type="match status" value="1"/>
</dbReference>
<dbReference type="SUPFAM" id="SSF81383">
    <property type="entry name" value="F-box domain"/>
    <property type="match status" value="1"/>
</dbReference>
<dbReference type="PROSITE" id="PS50181">
    <property type="entry name" value="FBOX"/>
    <property type="match status" value="1"/>
</dbReference>
<keyword id="KW-0025">Alternative splicing</keyword>
<keyword id="KW-1185">Reference proteome</keyword>